<comment type="function">
    <text evidence="1">Tyrosine-protein kinase that acts downstream of cell surface receptors and plays a role in the regulation of the actin cytoskeleton, microtubule assembly, cell attachment and cell spreading. Plays a role in FCER1 (high affinity immunoglobulin epsilon receptor)-mediated signaling in mast cells. Acts down-stream of the activated FCER1 receptor and the mast/stem cell growth factor receptor KIT. Plays a role in the regulation of mast cell degranulation. Plays a role in the regulation of cell differentiation and promotes neurite outgrowth in response to NGF signaling. Plays a role in cell scattering and cell migration in response to HGF-induced activation of EZR. Phosphorylates BCR and down-regulates BCR kinase activity. Phosphorylates HCLS1/HS1, PECAM1, STAT3 and TRIM28 (By similarity).</text>
</comment>
<comment type="catalytic activity">
    <reaction evidence="7">
        <text>L-tyrosyl-[protein] + ATP = O-phospho-L-tyrosyl-[protein] + ADP + H(+)</text>
        <dbReference type="Rhea" id="RHEA:10596"/>
        <dbReference type="Rhea" id="RHEA-COMP:10136"/>
        <dbReference type="Rhea" id="RHEA-COMP:20101"/>
        <dbReference type="ChEBI" id="CHEBI:15378"/>
        <dbReference type="ChEBI" id="CHEBI:30616"/>
        <dbReference type="ChEBI" id="CHEBI:46858"/>
        <dbReference type="ChEBI" id="CHEBI:61978"/>
        <dbReference type="ChEBI" id="CHEBI:456216"/>
        <dbReference type="EC" id="2.7.10.2"/>
    </reaction>
</comment>
<comment type="activity regulation">
    <text evidence="1">Kinase activity is tightly regulated. Activated in response to signaling from a cell surface receptor. Activation probably requires binding of a substrate via the SH2 domain, plus autophosphorylation at Tyr-711. Present in an inactive form in the absence of activating stimuli (By similarity).</text>
</comment>
<comment type="subunit">
    <text evidence="1">Homooligomer. Interacts with BCR. Interacts (when activated, via coiled coil domain) with TRIM28. Interacts (via SH2 domain) with phosphorylated EZR, MS4A2/FCER1B and HCLS1/HS1. Interacts with phosphorylated KIT. Interacts with FLT3. Interacts (via F-BAR domain) with soluble tubulin. Interacts (via SH2 domain) with microtubules (By similarity).</text>
</comment>
<comment type="subcellular location">
    <subcellularLocation>
        <location evidence="1">Cytoplasm</location>
        <location evidence="1">Cytosol</location>
    </subcellularLocation>
    <subcellularLocation>
        <location evidence="1">Cytoplasm</location>
        <location evidence="1">Cytoskeleton</location>
    </subcellularLocation>
    <subcellularLocation>
        <location evidence="1">Cell membrane</location>
        <topology evidence="1">Peripheral membrane protein</topology>
        <orientation evidence="1">Cytoplasmic side</orientation>
    </subcellularLocation>
    <subcellularLocation>
        <location evidence="1">Cytoplasmic vesicle</location>
    </subcellularLocation>
    <subcellularLocation>
        <location evidence="1">Golgi apparatus</location>
    </subcellularLocation>
    <subcellularLocation>
        <location evidence="1">Cell junction</location>
        <location evidence="1">Focal adhesion</location>
    </subcellularLocation>
    <text evidence="1">Distributed throughout the cytosol when the kinase is not activated. Association with microtubules requires activation of the kinase activity. Shuttles between focal adhesions and cell-cell contacts in epithelial cells. Recruited to the lateral cell membrane in polarized epithelial cells by interaction with phosphorylated EZR. Detected at tubular membrane structures in the cytoplasm and at the cell periphery (By similarity).</text>
</comment>
<comment type="domain">
    <text evidence="1">The coiled coil domains are important for regulating the kinase activity. They mediate homooligomerization and probably also interaction with other proteins (By similarity).</text>
</comment>
<comment type="domain">
    <text evidence="1">The N-terminal region including the first coiled coil domain mediates interaction with phosphoinositide-containing membranes.</text>
</comment>
<comment type="PTM">
    <text evidence="1">Autophosphorylated on Tyr-711 in response to FGF2. Phosphorylated by LYN in response to FCER1 activation. Phosphorylated by HCK (By similarity).</text>
</comment>
<comment type="similarity">
    <text evidence="4">Belongs to the protein kinase superfamily. Tyr protein kinase family. Fes/fps subfamily.</text>
</comment>
<dbReference type="EC" id="2.7.10.2"/>
<dbReference type="EMBL" id="M16705">
    <property type="protein sequence ID" value="AAA30808.1"/>
    <property type="molecule type" value="Genomic_DNA"/>
</dbReference>
<dbReference type="EMBL" id="M16666">
    <property type="protein sequence ID" value="AAA30808.1"/>
    <property type="status" value="JOINED"/>
    <property type="molecule type" value="Genomic_DNA"/>
</dbReference>
<dbReference type="EMBL" id="M16667">
    <property type="protein sequence ID" value="AAA30808.1"/>
    <property type="status" value="JOINED"/>
    <property type="molecule type" value="Genomic_DNA"/>
</dbReference>
<dbReference type="EMBL" id="M16668">
    <property type="protein sequence ID" value="AAA30808.1"/>
    <property type="status" value="JOINED"/>
    <property type="molecule type" value="Genomic_DNA"/>
</dbReference>
<dbReference type="EMBL" id="M16669">
    <property type="protein sequence ID" value="AAA30808.1"/>
    <property type="status" value="JOINED"/>
    <property type="molecule type" value="Genomic_DNA"/>
</dbReference>
<dbReference type="EMBL" id="M16670">
    <property type="protein sequence ID" value="AAA30808.1"/>
    <property type="status" value="JOINED"/>
    <property type="molecule type" value="Genomic_DNA"/>
</dbReference>
<dbReference type="EMBL" id="M16671">
    <property type="protein sequence ID" value="AAA30808.1"/>
    <property type="status" value="JOINED"/>
    <property type="molecule type" value="Genomic_DNA"/>
</dbReference>
<dbReference type="EMBL" id="M16706">
    <property type="protein sequence ID" value="AAA30808.1"/>
    <property type="status" value="JOINED"/>
    <property type="molecule type" value="Genomic_DNA"/>
</dbReference>
<dbReference type="EMBL" id="M16672">
    <property type="protein sequence ID" value="AAA30808.1"/>
    <property type="status" value="JOINED"/>
    <property type="molecule type" value="Genomic_DNA"/>
</dbReference>
<dbReference type="EMBL" id="M16673">
    <property type="protein sequence ID" value="AAA30808.1"/>
    <property type="status" value="JOINED"/>
    <property type="molecule type" value="Genomic_DNA"/>
</dbReference>
<dbReference type="EMBL" id="M16674">
    <property type="protein sequence ID" value="AAA30808.1"/>
    <property type="status" value="JOINED"/>
    <property type="molecule type" value="Genomic_DNA"/>
</dbReference>
<dbReference type="EMBL" id="M16698">
    <property type="protein sequence ID" value="AAA30808.1"/>
    <property type="status" value="JOINED"/>
    <property type="molecule type" value="Genomic_DNA"/>
</dbReference>
<dbReference type="EMBL" id="M16700">
    <property type="protein sequence ID" value="AAA30808.1"/>
    <property type="status" value="JOINED"/>
    <property type="molecule type" value="Genomic_DNA"/>
</dbReference>
<dbReference type="EMBL" id="M16701">
    <property type="protein sequence ID" value="AAA30808.1"/>
    <property type="status" value="JOINED"/>
    <property type="molecule type" value="Genomic_DNA"/>
</dbReference>
<dbReference type="EMBL" id="M16702">
    <property type="protein sequence ID" value="AAA30808.1"/>
    <property type="status" value="JOINED"/>
    <property type="molecule type" value="Genomic_DNA"/>
</dbReference>
<dbReference type="EMBL" id="M16704">
    <property type="protein sequence ID" value="AAA30808.1"/>
    <property type="status" value="JOINED"/>
    <property type="molecule type" value="Genomic_DNA"/>
</dbReference>
<dbReference type="PIR" id="A27824">
    <property type="entry name" value="TVCTFF"/>
</dbReference>
<dbReference type="SMR" id="P14238"/>
<dbReference type="STRING" id="9685.ENSFCAP00000053376"/>
<dbReference type="PaxDb" id="9685-ENSFCAP00000005663"/>
<dbReference type="eggNOG" id="KOG0194">
    <property type="taxonomic scope" value="Eukaryota"/>
</dbReference>
<dbReference type="InParanoid" id="P14238"/>
<dbReference type="Proteomes" id="UP000011712">
    <property type="component" value="Unplaced"/>
</dbReference>
<dbReference type="GO" id="GO:0005737">
    <property type="term" value="C:cytoplasm"/>
    <property type="evidence" value="ECO:0000250"/>
    <property type="project" value="UniProtKB"/>
</dbReference>
<dbReference type="GO" id="GO:0009898">
    <property type="term" value="C:cytoplasmic side of plasma membrane"/>
    <property type="evidence" value="ECO:0000250"/>
    <property type="project" value="UniProtKB"/>
</dbReference>
<dbReference type="GO" id="GO:0031410">
    <property type="term" value="C:cytoplasmic vesicle"/>
    <property type="evidence" value="ECO:0007669"/>
    <property type="project" value="UniProtKB-KW"/>
</dbReference>
<dbReference type="GO" id="GO:0005829">
    <property type="term" value="C:cytosol"/>
    <property type="evidence" value="ECO:0007669"/>
    <property type="project" value="UniProtKB-SubCell"/>
</dbReference>
<dbReference type="GO" id="GO:0005925">
    <property type="term" value="C:focal adhesion"/>
    <property type="evidence" value="ECO:0000250"/>
    <property type="project" value="UniProtKB"/>
</dbReference>
<dbReference type="GO" id="GO:0005794">
    <property type="term" value="C:Golgi apparatus"/>
    <property type="evidence" value="ECO:0007669"/>
    <property type="project" value="UniProtKB-SubCell"/>
</dbReference>
<dbReference type="GO" id="GO:0015630">
    <property type="term" value="C:microtubule cytoskeleton"/>
    <property type="evidence" value="ECO:0000250"/>
    <property type="project" value="UniProtKB"/>
</dbReference>
<dbReference type="GO" id="GO:0005886">
    <property type="term" value="C:plasma membrane"/>
    <property type="evidence" value="ECO:0000318"/>
    <property type="project" value="GO_Central"/>
</dbReference>
<dbReference type="GO" id="GO:0005524">
    <property type="term" value="F:ATP binding"/>
    <property type="evidence" value="ECO:0007669"/>
    <property type="project" value="UniProtKB-KW"/>
</dbReference>
<dbReference type="GO" id="GO:0034987">
    <property type="term" value="F:immunoglobulin receptor binding"/>
    <property type="evidence" value="ECO:0000250"/>
    <property type="project" value="UniProtKB"/>
</dbReference>
<dbReference type="GO" id="GO:0004715">
    <property type="term" value="F:non-membrane spanning protein tyrosine kinase activity"/>
    <property type="evidence" value="ECO:0000250"/>
    <property type="project" value="UniProtKB"/>
</dbReference>
<dbReference type="GO" id="GO:0035091">
    <property type="term" value="F:phosphatidylinositol binding"/>
    <property type="evidence" value="ECO:0000250"/>
    <property type="project" value="UniProtKB"/>
</dbReference>
<dbReference type="GO" id="GO:0004713">
    <property type="term" value="F:protein tyrosine kinase activity"/>
    <property type="evidence" value="ECO:0000250"/>
    <property type="project" value="UniProtKB"/>
</dbReference>
<dbReference type="GO" id="GO:0007155">
    <property type="term" value="P:cell adhesion"/>
    <property type="evidence" value="ECO:0000318"/>
    <property type="project" value="GO_Central"/>
</dbReference>
<dbReference type="GO" id="GO:0006935">
    <property type="term" value="P:chemotaxis"/>
    <property type="evidence" value="ECO:0000318"/>
    <property type="project" value="GO_Central"/>
</dbReference>
<dbReference type="GO" id="GO:0018108">
    <property type="term" value="P:peptidyl-tyrosine phosphorylation"/>
    <property type="evidence" value="ECO:0000250"/>
    <property type="project" value="UniProtKB"/>
</dbReference>
<dbReference type="GO" id="GO:0031116">
    <property type="term" value="P:positive regulation of microtubule polymerization"/>
    <property type="evidence" value="ECO:0000250"/>
    <property type="project" value="UniProtKB"/>
</dbReference>
<dbReference type="GO" id="GO:0045639">
    <property type="term" value="P:positive regulation of myeloid cell differentiation"/>
    <property type="evidence" value="ECO:0000250"/>
    <property type="project" value="UniProtKB"/>
</dbReference>
<dbReference type="GO" id="GO:0010976">
    <property type="term" value="P:positive regulation of neuron projection development"/>
    <property type="evidence" value="ECO:0000250"/>
    <property type="project" value="UniProtKB"/>
</dbReference>
<dbReference type="GO" id="GO:0030155">
    <property type="term" value="P:regulation of cell adhesion"/>
    <property type="evidence" value="ECO:0000250"/>
    <property type="project" value="UniProtKB"/>
</dbReference>
<dbReference type="GO" id="GO:0045595">
    <property type="term" value="P:regulation of cell differentiation"/>
    <property type="evidence" value="ECO:0000250"/>
    <property type="project" value="UniProtKB"/>
</dbReference>
<dbReference type="GO" id="GO:2000145">
    <property type="term" value="P:regulation of cell motility"/>
    <property type="evidence" value="ECO:0000250"/>
    <property type="project" value="UniProtKB"/>
</dbReference>
<dbReference type="GO" id="GO:0042127">
    <property type="term" value="P:regulation of cell population proliferation"/>
    <property type="evidence" value="ECO:0000250"/>
    <property type="project" value="UniProtKB"/>
</dbReference>
<dbReference type="GO" id="GO:0008360">
    <property type="term" value="P:regulation of cell shape"/>
    <property type="evidence" value="ECO:0000250"/>
    <property type="project" value="UniProtKB"/>
</dbReference>
<dbReference type="GO" id="GO:0043304">
    <property type="term" value="P:regulation of mast cell degranulation"/>
    <property type="evidence" value="ECO:0000250"/>
    <property type="project" value="UniProtKB"/>
</dbReference>
<dbReference type="CDD" id="cd07685">
    <property type="entry name" value="F-BAR_Fes"/>
    <property type="match status" value="1"/>
</dbReference>
<dbReference type="CDD" id="cd10361">
    <property type="entry name" value="SH2_Fps_family"/>
    <property type="match status" value="1"/>
</dbReference>
<dbReference type="FunFam" id="1.10.287.160:FF:000006">
    <property type="entry name" value="Tyrosine-protein kinase"/>
    <property type="match status" value="1"/>
</dbReference>
<dbReference type="FunFam" id="1.10.510.10:FF:000212">
    <property type="entry name" value="Tyrosine-protein kinase"/>
    <property type="match status" value="1"/>
</dbReference>
<dbReference type="FunFam" id="1.20.1270.60:FF:000030">
    <property type="entry name" value="Tyrosine-protein kinase"/>
    <property type="match status" value="1"/>
</dbReference>
<dbReference type="FunFam" id="3.30.200.20:FF:000089">
    <property type="entry name" value="Tyrosine-protein kinase"/>
    <property type="match status" value="1"/>
</dbReference>
<dbReference type="FunFam" id="3.30.505.10:FF:000020">
    <property type="entry name" value="Tyrosine-protein kinase"/>
    <property type="match status" value="1"/>
</dbReference>
<dbReference type="Gene3D" id="1.20.1270.60">
    <property type="entry name" value="Arfaptin homology (AH) domain/BAR domain"/>
    <property type="match status" value="1"/>
</dbReference>
<dbReference type="Gene3D" id="1.10.287.160">
    <property type="entry name" value="HR1 repeat"/>
    <property type="match status" value="1"/>
</dbReference>
<dbReference type="Gene3D" id="3.30.200.20">
    <property type="entry name" value="Phosphorylase Kinase, domain 1"/>
    <property type="match status" value="1"/>
</dbReference>
<dbReference type="Gene3D" id="3.30.505.10">
    <property type="entry name" value="SH2 domain"/>
    <property type="match status" value="1"/>
</dbReference>
<dbReference type="Gene3D" id="1.10.510.10">
    <property type="entry name" value="Transferase(Phosphotransferase) domain 1"/>
    <property type="match status" value="1"/>
</dbReference>
<dbReference type="InterPro" id="IPR027267">
    <property type="entry name" value="AH/BAR_dom_sf"/>
</dbReference>
<dbReference type="InterPro" id="IPR031160">
    <property type="entry name" value="F_BAR"/>
</dbReference>
<dbReference type="InterPro" id="IPR001060">
    <property type="entry name" value="FCH_dom"/>
</dbReference>
<dbReference type="InterPro" id="IPR035849">
    <property type="entry name" value="Fes/Fps/Fer_SH2"/>
</dbReference>
<dbReference type="InterPro" id="IPR011009">
    <property type="entry name" value="Kinase-like_dom_sf"/>
</dbReference>
<dbReference type="InterPro" id="IPR050198">
    <property type="entry name" value="Non-receptor_tyrosine_kinases"/>
</dbReference>
<dbReference type="InterPro" id="IPR000719">
    <property type="entry name" value="Prot_kinase_dom"/>
</dbReference>
<dbReference type="InterPro" id="IPR017441">
    <property type="entry name" value="Protein_kinase_ATP_BS"/>
</dbReference>
<dbReference type="InterPro" id="IPR001245">
    <property type="entry name" value="Ser-Thr/Tyr_kinase_cat_dom"/>
</dbReference>
<dbReference type="InterPro" id="IPR000980">
    <property type="entry name" value="SH2"/>
</dbReference>
<dbReference type="InterPro" id="IPR036860">
    <property type="entry name" value="SH2_dom_sf"/>
</dbReference>
<dbReference type="InterPro" id="IPR016250">
    <property type="entry name" value="Tyr-prot_kinase_Fes/Fps"/>
</dbReference>
<dbReference type="InterPro" id="IPR008266">
    <property type="entry name" value="Tyr_kinase_AS"/>
</dbReference>
<dbReference type="InterPro" id="IPR020635">
    <property type="entry name" value="Tyr_kinase_cat_dom"/>
</dbReference>
<dbReference type="PANTHER" id="PTHR24418">
    <property type="entry name" value="TYROSINE-PROTEIN KINASE"/>
    <property type="match status" value="1"/>
</dbReference>
<dbReference type="Pfam" id="PF00611">
    <property type="entry name" value="FCH"/>
    <property type="match status" value="1"/>
</dbReference>
<dbReference type="Pfam" id="PF07714">
    <property type="entry name" value="PK_Tyr_Ser-Thr"/>
    <property type="match status" value="1"/>
</dbReference>
<dbReference type="Pfam" id="PF00017">
    <property type="entry name" value="SH2"/>
    <property type="match status" value="1"/>
</dbReference>
<dbReference type="PIRSF" id="PIRSF000632">
    <property type="entry name" value="TyrPK_fps"/>
    <property type="match status" value="1"/>
</dbReference>
<dbReference type="PRINTS" id="PR00401">
    <property type="entry name" value="SH2DOMAIN"/>
</dbReference>
<dbReference type="PRINTS" id="PR00109">
    <property type="entry name" value="TYRKINASE"/>
</dbReference>
<dbReference type="SMART" id="SM00055">
    <property type="entry name" value="FCH"/>
    <property type="match status" value="1"/>
</dbReference>
<dbReference type="SMART" id="SM00252">
    <property type="entry name" value="SH2"/>
    <property type="match status" value="1"/>
</dbReference>
<dbReference type="SMART" id="SM00219">
    <property type="entry name" value="TyrKc"/>
    <property type="match status" value="1"/>
</dbReference>
<dbReference type="SUPFAM" id="SSF103657">
    <property type="entry name" value="BAR/IMD domain-like"/>
    <property type="match status" value="1"/>
</dbReference>
<dbReference type="SUPFAM" id="SSF56112">
    <property type="entry name" value="Protein kinase-like (PK-like)"/>
    <property type="match status" value="1"/>
</dbReference>
<dbReference type="SUPFAM" id="SSF55550">
    <property type="entry name" value="SH2 domain"/>
    <property type="match status" value="1"/>
</dbReference>
<dbReference type="PROSITE" id="PS51741">
    <property type="entry name" value="F_BAR"/>
    <property type="match status" value="1"/>
</dbReference>
<dbReference type="PROSITE" id="PS00107">
    <property type="entry name" value="PROTEIN_KINASE_ATP"/>
    <property type="match status" value="1"/>
</dbReference>
<dbReference type="PROSITE" id="PS50011">
    <property type="entry name" value="PROTEIN_KINASE_DOM"/>
    <property type="match status" value="1"/>
</dbReference>
<dbReference type="PROSITE" id="PS00109">
    <property type="entry name" value="PROTEIN_KINASE_TYR"/>
    <property type="match status" value="1"/>
</dbReference>
<dbReference type="PROSITE" id="PS50001">
    <property type="entry name" value="SH2"/>
    <property type="match status" value="1"/>
</dbReference>
<protein>
    <recommendedName>
        <fullName>Tyrosine-protein kinase Fes/Fps</fullName>
        <ecNumber>2.7.10.2</ecNumber>
    </recommendedName>
    <alternativeName>
        <fullName>Proto-oncogene c-Fes</fullName>
    </alternativeName>
</protein>
<gene>
    <name type="primary">FES</name>
    <name type="synonym">FPS</name>
</gene>
<sequence>MGFSSELCSPQGHGAVQQMQEAELRLLEGMRKWMAQRVKSDREYAGLLHHMSLQDGGGRGTGPYSPISQSWAEITSQTEGLSRLLRQHAEDLNSGPLSKLGLLIRERQQLRKTYSEQWQQLQQELTKTHNQDIEKLKSQYRALARDSAQARRKYQEASKDKDRDKAKDKYVRSLWKLFAHHNRYVLGVRAAQLHHHHHHQLMLPGLLQSLQDLHQEMACILKEILQEYLEISSLVQDEVVAIHLEMAAAVARIQPEAEYQGFLRQYGSTPDVPPCVTFDESLLEEGEPLEPGELQLNELTVESVQHTLTSVTDELTVATQTVLSRQEAVAQLQRELQNEEQNTHPRERVQLLAKKQVLQEALQALQVALCSQAKLQAQRELLQAKLEQLGPGEPPPVLLLQDDRHSTSSSEQEREGGRTPTLEILKSHISGIFRPKFSLPPPLQLVPEVQKPLHEQLWYHGALPRAEVAELLTHSGDFLVRESQGKQEYVLSVLWDGQPRHFIIESADNLYRLEGDGFASIPLLVDHLLRSQQPLTKKSGIVLNRAVPKDKWVLNHEDLVLGEQIGRGNFGEVFSGRLRADNTLVAVKSCRETLPPDIKAKFLQEAKILKQYSHPNIVRLIGVCTQKQPIYIVMELVQGGDFLTFLRTEGARLRMKTLLQMVGDAAAGMEYLESKCCIHRDLAARNCLVTEKNVLKISDFGMSREEADGIYAASGGLRQVPVKWTAPEALNYGRYSSESDVWSFGILLWETFSLGASPYPNLSNQQTREFVEKGGRLPCPELCPDAVFRLMEQCWAYEPGQRPSFSAIYQELQSIRKRHR</sequence>
<name>FES_FELCA</name>
<organism>
    <name type="scientific">Felis catus</name>
    <name type="common">Cat</name>
    <name type="synonym">Felis silvestris catus</name>
    <dbReference type="NCBI Taxonomy" id="9685"/>
    <lineage>
        <taxon>Eukaryota</taxon>
        <taxon>Metazoa</taxon>
        <taxon>Chordata</taxon>
        <taxon>Craniata</taxon>
        <taxon>Vertebrata</taxon>
        <taxon>Euteleostomi</taxon>
        <taxon>Mammalia</taxon>
        <taxon>Eutheria</taxon>
        <taxon>Laurasiatheria</taxon>
        <taxon>Carnivora</taxon>
        <taxon>Feliformia</taxon>
        <taxon>Felidae</taxon>
        <taxon>Felinae</taxon>
        <taxon>Felis</taxon>
    </lineage>
</organism>
<proteinExistence type="inferred from homology"/>
<reference key="1">
    <citation type="journal article" date="1987" name="J. Virol.">
        <title>Structure of the feline c-fes/fps proto-oncogene: genesis of a retroviral oncogene.</title>
        <authorList>
            <person name="Roebroek A.J.M."/>
            <person name="Schalken J.A."/>
            <person name="Onnekink C."/>
            <person name="Bloemers H.P.J."/>
            <person name="van de Ven W.J.M."/>
        </authorList>
    </citation>
    <scope>NUCLEOTIDE SEQUENCE [GENOMIC DNA]</scope>
</reference>
<keyword id="KW-0067">ATP-binding</keyword>
<keyword id="KW-0965">Cell junction</keyword>
<keyword id="KW-1003">Cell membrane</keyword>
<keyword id="KW-0175">Coiled coil</keyword>
<keyword id="KW-0963">Cytoplasm</keyword>
<keyword id="KW-0968">Cytoplasmic vesicle</keyword>
<keyword id="KW-0206">Cytoskeleton</keyword>
<keyword id="KW-0333">Golgi apparatus</keyword>
<keyword id="KW-0418">Kinase</keyword>
<keyword id="KW-0446">Lipid-binding</keyword>
<keyword id="KW-0472">Membrane</keyword>
<keyword id="KW-0547">Nucleotide-binding</keyword>
<keyword id="KW-0597">Phosphoprotein</keyword>
<keyword id="KW-0656">Proto-oncogene</keyword>
<keyword id="KW-1185">Reference proteome</keyword>
<keyword id="KW-0727">SH2 domain</keyword>
<keyword id="KW-0808">Transferase</keyword>
<keyword id="KW-0043">Tumor suppressor</keyword>
<keyword id="KW-0829">Tyrosine-protein kinase</keyword>
<feature type="chain" id="PRO_0000088085" description="Tyrosine-protein kinase Fes/Fps">
    <location>
        <begin position="1"/>
        <end position="820"/>
    </location>
</feature>
<feature type="domain" description="F-BAR" evidence="6">
    <location>
        <begin position="1"/>
        <end position="258"/>
    </location>
</feature>
<feature type="domain" description="SH2" evidence="5">
    <location>
        <begin position="458"/>
        <end position="547"/>
    </location>
</feature>
<feature type="domain" description="Protein kinase" evidence="4">
    <location>
        <begin position="559"/>
        <end position="820"/>
    </location>
</feature>
<feature type="region of interest" description="Important for interaction with membranes containing phosphoinositides" evidence="1">
    <location>
        <begin position="1"/>
        <end position="298"/>
    </location>
</feature>
<feature type="region of interest" description="Disordered" evidence="8">
    <location>
        <begin position="392"/>
        <end position="418"/>
    </location>
</feature>
<feature type="coiled-coil region" evidence="3">
    <location>
        <begin position="123"/>
        <end position="163"/>
    </location>
</feature>
<feature type="coiled-coil region" evidence="3">
    <location>
        <begin position="318"/>
        <end position="389"/>
    </location>
</feature>
<feature type="compositionally biased region" description="Basic and acidic residues" evidence="8">
    <location>
        <begin position="401"/>
        <end position="417"/>
    </location>
</feature>
<feature type="active site" description="Proton acceptor" evidence="4 7">
    <location>
        <position position="681"/>
    </location>
</feature>
<feature type="binding site" evidence="4">
    <location>
        <begin position="565"/>
        <end position="573"/>
    </location>
    <ligand>
        <name>ATP</name>
        <dbReference type="ChEBI" id="CHEBI:30616"/>
    </ligand>
</feature>
<feature type="binding site" evidence="4">
    <location>
        <position position="588"/>
    </location>
    <ligand>
        <name>ATP</name>
        <dbReference type="ChEBI" id="CHEBI:30616"/>
    </ligand>
</feature>
<feature type="modified residue" description="Phosphoserine" evidence="2">
    <location>
        <position position="65"/>
    </location>
</feature>
<feature type="modified residue" description="Phosphotyrosine" evidence="2">
    <location>
        <position position="259"/>
    </location>
</feature>
<feature type="modified residue" description="Phosphoserine" evidence="2">
    <location>
        <position position="406"/>
    </location>
</feature>
<feature type="modified residue" description="Phosphoserine" evidence="2">
    <location>
        <position position="409"/>
    </location>
</feature>
<feature type="modified residue" description="Phosphothreonine" evidence="2">
    <location>
        <position position="419"/>
    </location>
</feature>
<feature type="modified residue" description="Phosphotyrosine; by autocatalysis" evidence="2">
    <location>
        <position position="711"/>
    </location>
</feature>
<feature type="modified residue" description="Phosphoserine" evidence="2">
    <location>
        <position position="714"/>
    </location>
</feature>
<evidence type="ECO:0000250" key="1"/>
<evidence type="ECO:0000250" key="2">
    <source>
        <dbReference type="UniProtKB" id="P07332"/>
    </source>
</evidence>
<evidence type="ECO:0000255" key="3"/>
<evidence type="ECO:0000255" key="4">
    <source>
        <dbReference type="PROSITE-ProRule" id="PRU00159"/>
    </source>
</evidence>
<evidence type="ECO:0000255" key="5">
    <source>
        <dbReference type="PROSITE-ProRule" id="PRU00191"/>
    </source>
</evidence>
<evidence type="ECO:0000255" key="6">
    <source>
        <dbReference type="PROSITE-ProRule" id="PRU01077"/>
    </source>
</evidence>
<evidence type="ECO:0000255" key="7">
    <source>
        <dbReference type="PROSITE-ProRule" id="PRU10028"/>
    </source>
</evidence>
<evidence type="ECO:0000256" key="8">
    <source>
        <dbReference type="SAM" id="MobiDB-lite"/>
    </source>
</evidence>
<accession>P14238</accession>